<keyword id="KW-0963">Cytoplasm</keyword>
<keyword id="KW-0378">Hydrolase</keyword>
<keyword id="KW-0540">Nuclease</keyword>
<keyword id="KW-1185">Reference proteome</keyword>
<keyword id="KW-0690">Ribosome biogenesis</keyword>
<reference key="1">
    <citation type="journal article" date="2005" name="Infect. Immun.">
        <title>Whole-genome analyses of speciation events in pathogenic Brucellae.</title>
        <authorList>
            <person name="Chain P.S."/>
            <person name="Comerci D.J."/>
            <person name="Tolmasky M.E."/>
            <person name="Larimer F.W."/>
            <person name="Malfatti S.A."/>
            <person name="Vergez L.M."/>
            <person name="Aguero F."/>
            <person name="Land M.L."/>
            <person name="Ugalde R.A."/>
            <person name="Garcia E."/>
        </authorList>
    </citation>
    <scope>NUCLEOTIDE SEQUENCE [LARGE SCALE GENOMIC DNA]</scope>
    <source>
        <strain>2308</strain>
    </source>
</reference>
<organism>
    <name type="scientific">Brucella abortus (strain 2308)</name>
    <dbReference type="NCBI Taxonomy" id="359391"/>
    <lineage>
        <taxon>Bacteria</taxon>
        <taxon>Pseudomonadati</taxon>
        <taxon>Pseudomonadota</taxon>
        <taxon>Alphaproteobacteria</taxon>
        <taxon>Hyphomicrobiales</taxon>
        <taxon>Brucellaceae</taxon>
        <taxon>Brucella/Ochrobactrum group</taxon>
        <taxon>Brucella</taxon>
    </lineage>
</organism>
<sequence length="162" mass="17559">MATAEIEEIPALLKPGQTVAGLDLGTKTIGLAVSDLGLSFAHPRPVIKRVKFTIDAQVLLKALETDKVGVIMIGLPMNMDGTAGPRVQATRAFVRTMQPLTDLPFVFWDERLSTVAAERALIGMDVSRGKRADRIDSAAAAFILQGALDRLHMMRRNDYDAG</sequence>
<comment type="function">
    <text evidence="1">Could be a nuclease involved in processing of the 5'-end of pre-16S rRNA.</text>
</comment>
<comment type="subcellular location">
    <subcellularLocation>
        <location evidence="1">Cytoplasm</location>
    </subcellularLocation>
</comment>
<comment type="similarity">
    <text evidence="1">Belongs to the YqgF nuclease family.</text>
</comment>
<feature type="chain" id="PRO_0000257508" description="Putative pre-16S rRNA nuclease">
    <location>
        <begin position="1"/>
        <end position="162"/>
    </location>
</feature>
<evidence type="ECO:0000255" key="1">
    <source>
        <dbReference type="HAMAP-Rule" id="MF_00651"/>
    </source>
</evidence>
<accession>Q2YKL6</accession>
<gene>
    <name type="ordered locus">BAB2_0643</name>
</gene>
<protein>
    <recommendedName>
        <fullName evidence="1">Putative pre-16S rRNA nuclease</fullName>
        <ecNumber evidence="1">3.1.-.-</ecNumber>
    </recommendedName>
</protein>
<name>YQGF_BRUA2</name>
<proteinExistence type="inferred from homology"/>
<dbReference type="EC" id="3.1.-.-" evidence="1"/>
<dbReference type="EMBL" id="AM040265">
    <property type="protein sequence ID" value="CAJ12809.1"/>
    <property type="molecule type" value="Genomic_DNA"/>
</dbReference>
<dbReference type="SMR" id="Q2YKL6"/>
<dbReference type="STRING" id="359391.BAB2_0643"/>
<dbReference type="KEGG" id="bmf:BAB2_0643"/>
<dbReference type="PATRIC" id="fig|359391.11.peg.2824"/>
<dbReference type="HOGENOM" id="CLU_098240_1_1_5"/>
<dbReference type="PhylomeDB" id="Q2YKL6"/>
<dbReference type="Proteomes" id="UP000002719">
    <property type="component" value="Chromosome II"/>
</dbReference>
<dbReference type="GO" id="GO:0005829">
    <property type="term" value="C:cytosol"/>
    <property type="evidence" value="ECO:0007669"/>
    <property type="project" value="TreeGrafter"/>
</dbReference>
<dbReference type="GO" id="GO:0004518">
    <property type="term" value="F:nuclease activity"/>
    <property type="evidence" value="ECO:0007669"/>
    <property type="project" value="UniProtKB-KW"/>
</dbReference>
<dbReference type="GO" id="GO:0000967">
    <property type="term" value="P:rRNA 5'-end processing"/>
    <property type="evidence" value="ECO:0007669"/>
    <property type="project" value="UniProtKB-UniRule"/>
</dbReference>
<dbReference type="CDD" id="cd16964">
    <property type="entry name" value="YqgF"/>
    <property type="match status" value="1"/>
</dbReference>
<dbReference type="Gene3D" id="3.30.420.140">
    <property type="entry name" value="YqgF/RNase H-like domain"/>
    <property type="match status" value="1"/>
</dbReference>
<dbReference type="HAMAP" id="MF_00651">
    <property type="entry name" value="Nuclease_YqgF"/>
    <property type="match status" value="1"/>
</dbReference>
<dbReference type="InterPro" id="IPR012337">
    <property type="entry name" value="RNaseH-like_sf"/>
</dbReference>
<dbReference type="InterPro" id="IPR005227">
    <property type="entry name" value="YqgF"/>
</dbReference>
<dbReference type="InterPro" id="IPR006641">
    <property type="entry name" value="YqgF/RNaseH-like_dom"/>
</dbReference>
<dbReference type="InterPro" id="IPR037027">
    <property type="entry name" value="YqgF/RNaseH-like_dom_sf"/>
</dbReference>
<dbReference type="NCBIfam" id="TIGR00250">
    <property type="entry name" value="RNAse_H_YqgF"/>
    <property type="match status" value="1"/>
</dbReference>
<dbReference type="PANTHER" id="PTHR33317">
    <property type="entry name" value="POLYNUCLEOTIDYL TRANSFERASE, RIBONUCLEASE H-LIKE SUPERFAMILY PROTEIN"/>
    <property type="match status" value="1"/>
</dbReference>
<dbReference type="PANTHER" id="PTHR33317:SF4">
    <property type="entry name" value="POLYNUCLEOTIDYL TRANSFERASE, RIBONUCLEASE H-LIKE SUPERFAMILY PROTEIN"/>
    <property type="match status" value="1"/>
</dbReference>
<dbReference type="Pfam" id="PF03652">
    <property type="entry name" value="RuvX"/>
    <property type="match status" value="1"/>
</dbReference>
<dbReference type="SMART" id="SM00732">
    <property type="entry name" value="YqgFc"/>
    <property type="match status" value="1"/>
</dbReference>
<dbReference type="SUPFAM" id="SSF53098">
    <property type="entry name" value="Ribonuclease H-like"/>
    <property type="match status" value="1"/>
</dbReference>